<evidence type="ECO:0000255" key="1">
    <source>
        <dbReference type="HAMAP-Rule" id="MF_00121"/>
    </source>
</evidence>
<gene>
    <name evidence="1" type="primary">gatB</name>
    <name type="ordered locus">Ecaj_0268</name>
</gene>
<keyword id="KW-0067">ATP-binding</keyword>
<keyword id="KW-0436">Ligase</keyword>
<keyword id="KW-0547">Nucleotide-binding</keyword>
<keyword id="KW-0648">Protein biosynthesis</keyword>
<comment type="function">
    <text evidence="1">Allows the formation of correctly charged Asn-tRNA(Asn) or Gln-tRNA(Gln) through the transamidation of misacylated Asp-tRNA(Asn) or Glu-tRNA(Gln) in organisms which lack either or both of asparaginyl-tRNA or glutaminyl-tRNA synthetases. The reaction takes place in the presence of glutamine and ATP through an activated phospho-Asp-tRNA(Asn) or phospho-Glu-tRNA(Gln).</text>
</comment>
<comment type="catalytic activity">
    <reaction evidence="1">
        <text>L-glutamyl-tRNA(Gln) + L-glutamine + ATP + H2O = L-glutaminyl-tRNA(Gln) + L-glutamate + ADP + phosphate + H(+)</text>
        <dbReference type="Rhea" id="RHEA:17521"/>
        <dbReference type="Rhea" id="RHEA-COMP:9681"/>
        <dbReference type="Rhea" id="RHEA-COMP:9684"/>
        <dbReference type="ChEBI" id="CHEBI:15377"/>
        <dbReference type="ChEBI" id="CHEBI:15378"/>
        <dbReference type="ChEBI" id="CHEBI:29985"/>
        <dbReference type="ChEBI" id="CHEBI:30616"/>
        <dbReference type="ChEBI" id="CHEBI:43474"/>
        <dbReference type="ChEBI" id="CHEBI:58359"/>
        <dbReference type="ChEBI" id="CHEBI:78520"/>
        <dbReference type="ChEBI" id="CHEBI:78521"/>
        <dbReference type="ChEBI" id="CHEBI:456216"/>
    </reaction>
</comment>
<comment type="catalytic activity">
    <reaction evidence="1">
        <text>L-aspartyl-tRNA(Asn) + L-glutamine + ATP + H2O = L-asparaginyl-tRNA(Asn) + L-glutamate + ADP + phosphate + 2 H(+)</text>
        <dbReference type="Rhea" id="RHEA:14513"/>
        <dbReference type="Rhea" id="RHEA-COMP:9674"/>
        <dbReference type="Rhea" id="RHEA-COMP:9677"/>
        <dbReference type="ChEBI" id="CHEBI:15377"/>
        <dbReference type="ChEBI" id="CHEBI:15378"/>
        <dbReference type="ChEBI" id="CHEBI:29985"/>
        <dbReference type="ChEBI" id="CHEBI:30616"/>
        <dbReference type="ChEBI" id="CHEBI:43474"/>
        <dbReference type="ChEBI" id="CHEBI:58359"/>
        <dbReference type="ChEBI" id="CHEBI:78515"/>
        <dbReference type="ChEBI" id="CHEBI:78516"/>
        <dbReference type="ChEBI" id="CHEBI:456216"/>
    </reaction>
</comment>
<comment type="subunit">
    <text evidence="1">Heterotrimer of A, B and C subunits.</text>
</comment>
<comment type="similarity">
    <text evidence="1">Belongs to the GatB/GatE family. GatB subfamily.</text>
</comment>
<accession>Q3YSJ0</accession>
<protein>
    <recommendedName>
        <fullName evidence="1">Aspartyl/glutamyl-tRNA(Asn/Gln) amidotransferase subunit B</fullName>
        <shortName evidence="1">Asp/Glu-ADT subunit B</shortName>
        <ecNumber evidence="1">6.3.5.-</ecNumber>
    </recommendedName>
</protein>
<name>GATB_EHRCJ</name>
<dbReference type="EC" id="6.3.5.-" evidence="1"/>
<dbReference type="EMBL" id="CP000107">
    <property type="protein sequence ID" value="AAZ68315.1"/>
    <property type="molecule type" value="Genomic_DNA"/>
</dbReference>
<dbReference type="RefSeq" id="WP_011304393.1">
    <property type="nucleotide sequence ID" value="NC_007354.1"/>
</dbReference>
<dbReference type="SMR" id="Q3YSJ0"/>
<dbReference type="STRING" id="269484.Ecaj_0268"/>
<dbReference type="KEGG" id="ecn:Ecaj_0268"/>
<dbReference type="eggNOG" id="COG0064">
    <property type="taxonomic scope" value="Bacteria"/>
</dbReference>
<dbReference type="HOGENOM" id="CLU_019240_0_0_5"/>
<dbReference type="InParanoid" id="Q3YSJ0"/>
<dbReference type="Proteomes" id="UP000000435">
    <property type="component" value="Chromosome"/>
</dbReference>
<dbReference type="GO" id="GO:0050566">
    <property type="term" value="F:asparaginyl-tRNA synthase (glutamine-hydrolyzing) activity"/>
    <property type="evidence" value="ECO:0007669"/>
    <property type="project" value="RHEA"/>
</dbReference>
<dbReference type="GO" id="GO:0005524">
    <property type="term" value="F:ATP binding"/>
    <property type="evidence" value="ECO:0007669"/>
    <property type="project" value="UniProtKB-KW"/>
</dbReference>
<dbReference type="GO" id="GO:0050567">
    <property type="term" value="F:glutaminyl-tRNA synthase (glutamine-hydrolyzing) activity"/>
    <property type="evidence" value="ECO:0007669"/>
    <property type="project" value="UniProtKB-UniRule"/>
</dbReference>
<dbReference type="GO" id="GO:0070681">
    <property type="term" value="P:glutaminyl-tRNAGln biosynthesis via transamidation"/>
    <property type="evidence" value="ECO:0007669"/>
    <property type="project" value="TreeGrafter"/>
</dbReference>
<dbReference type="GO" id="GO:0006412">
    <property type="term" value="P:translation"/>
    <property type="evidence" value="ECO:0007669"/>
    <property type="project" value="UniProtKB-UniRule"/>
</dbReference>
<dbReference type="FunFam" id="1.10.10.410:FF:000001">
    <property type="entry name" value="Aspartyl/glutamyl-tRNA(Asn/Gln) amidotransferase subunit B"/>
    <property type="match status" value="1"/>
</dbReference>
<dbReference type="Gene3D" id="1.10.10.410">
    <property type="match status" value="1"/>
</dbReference>
<dbReference type="Gene3D" id="1.10.150.380">
    <property type="entry name" value="GatB domain, N-terminal subdomain"/>
    <property type="match status" value="1"/>
</dbReference>
<dbReference type="HAMAP" id="MF_00121">
    <property type="entry name" value="GatB"/>
    <property type="match status" value="1"/>
</dbReference>
<dbReference type="InterPro" id="IPR017959">
    <property type="entry name" value="Asn/Gln-tRNA_amidoTrfase_suB/E"/>
</dbReference>
<dbReference type="InterPro" id="IPR006075">
    <property type="entry name" value="Asn/Gln-tRNA_Trfase_suB/E_cat"/>
</dbReference>
<dbReference type="InterPro" id="IPR018027">
    <property type="entry name" value="Asn/Gln_amidotransferase"/>
</dbReference>
<dbReference type="InterPro" id="IPR003789">
    <property type="entry name" value="Asn/Gln_tRNA_amidoTrase-B-like"/>
</dbReference>
<dbReference type="InterPro" id="IPR004413">
    <property type="entry name" value="GatB"/>
</dbReference>
<dbReference type="InterPro" id="IPR042114">
    <property type="entry name" value="GatB_C_1"/>
</dbReference>
<dbReference type="InterPro" id="IPR023168">
    <property type="entry name" value="GatB_Yqey_C_2"/>
</dbReference>
<dbReference type="InterPro" id="IPR017958">
    <property type="entry name" value="Gln-tRNA_amidoTrfase_suB_CS"/>
</dbReference>
<dbReference type="InterPro" id="IPR014746">
    <property type="entry name" value="Gln_synth/guanido_kin_cat_dom"/>
</dbReference>
<dbReference type="NCBIfam" id="TIGR00133">
    <property type="entry name" value="gatB"/>
    <property type="match status" value="1"/>
</dbReference>
<dbReference type="NCBIfam" id="NF004012">
    <property type="entry name" value="PRK05477.1-2"/>
    <property type="match status" value="1"/>
</dbReference>
<dbReference type="NCBIfam" id="NF004014">
    <property type="entry name" value="PRK05477.1-4"/>
    <property type="match status" value="1"/>
</dbReference>
<dbReference type="NCBIfam" id="NF004015">
    <property type="entry name" value="PRK05477.1-5"/>
    <property type="match status" value="1"/>
</dbReference>
<dbReference type="PANTHER" id="PTHR11659">
    <property type="entry name" value="GLUTAMYL-TRNA GLN AMIDOTRANSFERASE SUBUNIT B MITOCHONDRIAL AND PROKARYOTIC PET112-RELATED"/>
    <property type="match status" value="1"/>
</dbReference>
<dbReference type="PANTHER" id="PTHR11659:SF0">
    <property type="entry name" value="GLUTAMYL-TRNA(GLN) AMIDOTRANSFERASE SUBUNIT B, MITOCHONDRIAL"/>
    <property type="match status" value="1"/>
</dbReference>
<dbReference type="Pfam" id="PF02934">
    <property type="entry name" value="GatB_N"/>
    <property type="match status" value="1"/>
</dbReference>
<dbReference type="Pfam" id="PF02637">
    <property type="entry name" value="GatB_Yqey"/>
    <property type="match status" value="1"/>
</dbReference>
<dbReference type="SMART" id="SM00845">
    <property type="entry name" value="GatB_Yqey"/>
    <property type="match status" value="1"/>
</dbReference>
<dbReference type="SUPFAM" id="SSF89095">
    <property type="entry name" value="GatB/YqeY motif"/>
    <property type="match status" value="1"/>
</dbReference>
<dbReference type="SUPFAM" id="SSF55931">
    <property type="entry name" value="Glutamine synthetase/guanido kinase"/>
    <property type="match status" value="1"/>
</dbReference>
<dbReference type="PROSITE" id="PS01234">
    <property type="entry name" value="GATB"/>
    <property type="match status" value="1"/>
</dbReference>
<proteinExistence type="inferred from homology"/>
<organism>
    <name type="scientific">Ehrlichia canis (strain Jake)</name>
    <dbReference type="NCBI Taxonomy" id="269484"/>
    <lineage>
        <taxon>Bacteria</taxon>
        <taxon>Pseudomonadati</taxon>
        <taxon>Pseudomonadota</taxon>
        <taxon>Alphaproteobacteria</taxon>
        <taxon>Rickettsiales</taxon>
        <taxon>Anaplasmataceae</taxon>
        <taxon>Ehrlichia</taxon>
    </lineage>
</organism>
<feature type="chain" id="PRO_0000241219" description="Aspartyl/glutamyl-tRNA(Asn/Gln) amidotransferase subunit B">
    <location>
        <begin position="1"/>
        <end position="482"/>
    </location>
</feature>
<reference key="1">
    <citation type="journal article" date="2006" name="J. Bacteriol.">
        <title>The genome of the obligately intracellular bacterium Ehrlichia canis reveals themes of complex membrane structure and immune evasion strategies.</title>
        <authorList>
            <person name="Mavromatis K."/>
            <person name="Doyle C.K."/>
            <person name="Lykidis A."/>
            <person name="Ivanova N."/>
            <person name="Francino M.P."/>
            <person name="Chain P."/>
            <person name="Shin M."/>
            <person name="Malfatti S."/>
            <person name="Larimer F."/>
            <person name="Copeland A."/>
            <person name="Detter J.C."/>
            <person name="Land M."/>
            <person name="Richardson P.M."/>
            <person name="Yu X.J."/>
            <person name="Walker D.H."/>
            <person name="McBride J.W."/>
            <person name="Kyrpides N.C."/>
        </authorList>
    </citation>
    <scope>NUCLEOTIDE SEQUENCE [LARGE SCALE GENOMIC DNA]</scope>
    <source>
        <strain>Jake</strain>
    </source>
</reference>
<sequence length="482" mass="54735">MRVIKGNKCDWEVVIGLEVHAQVISNSKLFSGASAKTYDAPPNTQVSLFDVAMPGMLPVLNEYCIYQAVKTGIALSCKISKYSAFDRKNYFYPDLPAGYQITQFYYPIATEGKVVLEDHNAKEVRIARIHLEQDAGKSIHEFSQTYIDFNRAGVALMEIVSEPDLRSVEEVAEYLKKLRMILRFIGTCDGDMEKGSFRCDANVSVRPFGSNELGVRSEIKNLNSIRYVMQAIEYEANKQVNILENNEIFTQNTLLFDVSLGQTRVIRTKEDAHDYRYFPDPDLFPVKIDDQYIDHVKSLLPELPLQKRDRYINDFNLNKSDADILSSDKDVAMYFEKVVEKHDARLAASWIIGELFGRLNKLGITIDESSVKAEHLIQLLDLIVDNTISGKIAKQVFDMMFESGKLPALIVSEHGLKQVDDADVLYVVVEKILKDNASKVEEYKQGKEKLFGYFVGQVMKETQGKANPEMVNSIIKQQLESK</sequence>